<sequence>MEFIDLAPSAHARGAVQLPGSKSISNRTLLLAALAQGETQIRDLLKSDDTDRMLEALTSLGVTLTRTGENDYHLVGTGGSFPHKEADLFLGNAGTAFRPLTAALAFSGGTYKLHGVPRMHERPIGDLVDALRQVGADITYLGQEGFPPLLIKPAHIAAQGSIKIRGDVSSQFLTALLMALPMTGKETHIELVSELISKPYIEITLRLMAQFGVEVQRDGWERFTVPAASGYVSPGTVYVEGDASSASYFLAAGALGGGPVRVQGVGAKSIQGDVAFADALEAIGVTITKGDNWIEASAPQLPLKAFNRDFNHIPDAAMTLAVVALFCDGPSRLTNIASWRVKETDRIAAMATELRKLGAIVEEGEDWLQVTPVPTLNAQVPIDTYDDHRMAMCFSLATFGGVPVRINDPQCTAKTFPTYFDVFSQVVS</sequence>
<evidence type="ECO:0000255" key="1">
    <source>
        <dbReference type="HAMAP-Rule" id="MF_00210"/>
    </source>
</evidence>
<reference key="1">
    <citation type="journal article" date="2008" name="J. Bacteriol.">
        <title>Insights into plant cell wall degradation from the genome sequence of the soil bacterium Cellvibrio japonicus.</title>
        <authorList>
            <person name="DeBoy R.T."/>
            <person name="Mongodin E.F."/>
            <person name="Fouts D.E."/>
            <person name="Tailford L.E."/>
            <person name="Khouri H."/>
            <person name="Emerson J.B."/>
            <person name="Mohamoud Y."/>
            <person name="Watkins K."/>
            <person name="Henrissat B."/>
            <person name="Gilbert H.J."/>
            <person name="Nelson K.E."/>
        </authorList>
    </citation>
    <scope>NUCLEOTIDE SEQUENCE [LARGE SCALE GENOMIC DNA]</scope>
    <source>
        <strain>Ueda107</strain>
    </source>
</reference>
<comment type="function">
    <text evidence="1">Catalyzes the transfer of the enolpyruvyl moiety of phosphoenolpyruvate (PEP) to the 5-hydroxyl of shikimate-3-phosphate (S3P) to produce enolpyruvyl shikimate-3-phosphate and inorganic phosphate.</text>
</comment>
<comment type="catalytic activity">
    <reaction evidence="1">
        <text>3-phosphoshikimate + phosphoenolpyruvate = 5-O-(1-carboxyvinyl)-3-phosphoshikimate + phosphate</text>
        <dbReference type="Rhea" id="RHEA:21256"/>
        <dbReference type="ChEBI" id="CHEBI:43474"/>
        <dbReference type="ChEBI" id="CHEBI:57701"/>
        <dbReference type="ChEBI" id="CHEBI:58702"/>
        <dbReference type="ChEBI" id="CHEBI:145989"/>
        <dbReference type="EC" id="2.5.1.19"/>
    </reaction>
    <physiologicalReaction direction="left-to-right" evidence="1">
        <dbReference type="Rhea" id="RHEA:21257"/>
    </physiologicalReaction>
</comment>
<comment type="pathway">
    <text evidence="1">Metabolic intermediate biosynthesis; chorismate biosynthesis; chorismate from D-erythrose 4-phosphate and phosphoenolpyruvate: step 6/7.</text>
</comment>
<comment type="subunit">
    <text evidence="1">Monomer.</text>
</comment>
<comment type="subcellular location">
    <subcellularLocation>
        <location evidence="1">Cytoplasm</location>
    </subcellularLocation>
</comment>
<comment type="similarity">
    <text evidence="1">Belongs to the EPSP synthase family.</text>
</comment>
<keyword id="KW-0028">Amino-acid biosynthesis</keyword>
<keyword id="KW-0057">Aromatic amino acid biosynthesis</keyword>
<keyword id="KW-0963">Cytoplasm</keyword>
<keyword id="KW-1185">Reference proteome</keyword>
<keyword id="KW-0808">Transferase</keyword>
<feature type="chain" id="PRO_1000099676" description="3-phosphoshikimate 1-carboxyvinyltransferase">
    <location>
        <begin position="1"/>
        <end position="428"/>
    </location>
</feature>
<feature type="active site" description="Proton acceptor" evidence="1">
    <location>
        <position position="315"/>
    </location>
</feature>
<feature type="binding site" evidence="1">
    <location>
        <position position="22"/>
    </location>
    <ligand>
        <name>3-phosphoshikimate</name>
        <dbReference type="ChEBI" id="CHEBI:145989"/>
    </ligand>
</feature>
<feature type="binding site" evidence="1">
    <location>
        <position position="22"/>
    </location>
    <ligand>
        <name>phosphoenolpyruvate</name>
        <dbReference type="ChEBI" id="CHEBI:58702"/>
    </ligand>
</feature>
<feature type="binding site" evidence="1">
    <location>
        <position position="23"/>
    </location>
    <ligand>
        <name>3-phosphoshikimate</name>
        <dbReference type="ChEBI" id="CHEBI:145989"/>
    </ligand>
</feature>
<feature type="binding site" evidence="1">
    <location>
        <position position="27"/>
    </location>
    <ligand>
        <name>3-phosphoshikimate</name>
        <dbReference type="ChEBI" id="CHEBI:145989"/>
    </ligand>
</feature>
<feature type="binding site" evidence="1">
    <location>
        <position position="94"/>
    </location>
    <ligand>
        <name>phosphoenolpyruvate</name>
        <dbReference type="ChEBI" id="CHEBI:58702"/>
    </ligand>
</feature>
<feature type="binding site" evidence="1">
    <location>
        <position position="122"/>
    </location>
    <ligand>
        <name>phosphoenolpyruvate</name>
        <dbReference type="ChEBI" id="CHEBI:58702"/>
    </ligand>
</feature>
<feature type="binding site" evidence="1">
    <location>
        <position position="169"/>
    </location>
    <ligand>
        <name>3-phosphoshikimate</name>
        <dbReference type="ChEBI" id="CHEBI:145989"/>
    </ligand>
</feature>
<feature type="binding site" evidence="1">
    <location>
        <position position="170"/>
    </location>
    <ligand>
        <name>3-phosphoshikimate</name>
        <dbReference type="ChEBI" id="CHEBI:145989"/>
    </ligand>
</feature>
<feature type="binding site" evidence="1">
    <location>
        <position position="171"/>
    </location>
    <ligand>
        <name>3-phosphoshikimate</name>
        <dbReference type="ChEBI" id="CHEBI:145989"/>
    </ligand>
</feature>
<feature type="binding site" evidence="1">
    <location>
        <position position="171"/>
    </location>
    <ligand>
        <name>phosphoenolpyruvate</name>
        <dbReference type="ChEBI" id="CHEBI:58702"/>
    </ligand>
</feature>
<feature type="binding site" evidence="1">
    <location>
        <position position="197"/>
    </location>
    <ligand>
        <name>3-phosphoshikimate</name>
        <dbReference type="ChEBI" id="CHEBI:145989"/>
    </ligand>
</feature>
<feature type="binding site" evidence="1">
    <location>
        <position position="315"/>
    </location>
    <ligand>
        <name>3-phosphoshikimate</name>
        <dbReference type="ChEBI" id="CHEBI:145989"/>
    </ligand>
</feature>
<feature type="binding site" evidence="1">
    <location>
        <position position="342"/>
    </location>
    <ligand>
        <name>3-phosphoshikimate</name>
        <dbReference type="ChEBI" id="CHEBI:145989"/>
    </ligand>
</feature>
<feature type="binding site" evidence="1">
    <location>
        <position position="346"/>
    </location>
    <ligand>
        <name>phosphoenolpyruvate</name>
        <dbReference type="ChEBI" id="CHEBI:58702"/>
    </ligand>
</feature>
<feature type="binding site" evidence="1">
    <location>
        <position position="389"/>
    </location>
    <ligand>
        <name>phosphoenolpyruvate</name>
        <dbReference type="ChEBI" id="CHEBI:58702"/>
    </ligand>
</feature>
<feature type="binding site" evidence="1">
    <location>
        <position position="414"/>
    </location>
    <ligand>
        <name>phosphoenolpyruvate</name>
        <dbReference type="ChEBI" id="CHEBI:58702"/>
    </ligand>
</feature>
<dbReference type="EC" id="2.5.1.19" evidence="1"/>
<dbReference type="EMBL" id="CP000934">
    <property type="protein sequence ID" value="ACE85131.1"/>
    <property type="molecule type" value="Genomic_DNA"/>
</dbReference>
<dbReference type="RefSeq" id="WP_012486305.1">
    <property type="nucleotide sequence ID" value="NC_010995.1"/>
</dbReference>
<dbReference type="SMR" id="B3PJM0"/>
<dbReference type="STRING" id="498211.CJA_0627"/>
<dbReference type="KEGG" id="cja:CJA_0627"/>
<dbReference type="eggNOG" id="COG0128">
    <property type="taxonomic scope" value="Bacteria"/>
</dbReference>
<dbReference type="HOGENOM" id="CLU_024321_0_0_6"/>
<dbReference type="OrthoDB" id="9809920at2"/>
<dbReference type="UniPathway" id="UPA00053">
    <property type="reaction ID" value="UER00089"/>
</dbReference>
<dbReference type="Proteomes" id="UP000001036">
    <property type="component" value="Chromosome"/>
</dbReference>
<dbReference type="GO" id="GO:0005737">
    <property type="term" value="C:cytoplasm"/>
    <property type="evidence" value="ECO:0007669"/>
    <property type="project" value="UniProtKB-SubCell"/>
</dbReference>
<dbReference type="GO" id="GO:0003866">
    <property type="term" value="F:3-phosphoshikimate 1-carboxyvinyltransferase activity"/>
    <property type="evidence" value="ECO:0007669"/>
    <property type="project" value="UniProtKB-UniRule"/>
</dbReference>
<dbReference type="GO" id="GO:0008652">
    <property type="term" value="P:amino acid biosynthetic process"/>
    <property type="evidence" value="ECO:0007669"/>
    <property type="project" value="UniProtKB-KW"/>
</dbReference>
<dbReference type="GO" id="GO:0009073">
    <property type="term" value="P:aromatic amino acid family biosynthetic process"/>
    <property type="evidence" value="ECO:0007669"/>
    <property type="project" value="UniProtKB-KW"/>
</dbReference>
<dbReference type="GO" id="GO:0009423">
    <property type="term" value="P:chorismate biosynthetic process"/>
    <property type="evidence" value="ECO:0007669"/>
    <property type="project" value="UniProtKB-UniRule"/>
</dbReference>
<dbReference type="CDD" id="cd01556">
    <property type="entry name" value="EPSP_synthase"/>
    <property type="match status" value="1"/>
</dbReference>
<dbReference type="FunFam" id="3.65.10.10:FF:000003">
    <property type="entry name" value="3-phosphoshikimate 1-carboxyvinyltransferase"/>
    <property type="match status" value="1"/>
</dbReference>
<dbReference type="FunFam" id="3.65.10.10:FF:000004">
    <property type="entry name" value="3-phosphoshikimate 1-carboxyvinyltransferase"/>
    <property type="match status" value="1"/>
</dbReference>
<dbReference type="Gene3D" id="3.65.10.10">
    <property type="entry name" value="Enolpyruvate transferase domain"/>
    <property type="match status" value="2"/>
</dbReference>
<dbReference type="HAMAP" id="MF_00210">
    <property type="entry name" value="EPSP_synth"/>
    <property type="match status" value="1"/>
</dbReference>
<dbReference type="InterPro" id="IPR001986">
    <property type="entry name" value="Enolpyruvate_Tfrase_dom"/>
</dbReference>
<dbReference type="InterPro" id="IPR036968">
    <property type="entry name" value="Enolpyruvate_Tfrase_sf"/>
</dbReference>
<dbReference type="InterPro" id="IPR006264">
    <property type="entry name" value="EPSP_synthase"/>
</dbReference>
<dbReference type="InterPro" id="IPR023193">
    <property type="entry name" value="EPSP_synthase_CS"/>
</dbReference>
<dbReference type="InterPro" id="IPR013792">
    <property type="entry name" value="RNA3'P_cycl/enolpyr_Trfase_a/b"/>
</dbReference>
<dbReference type="NCBIfam" id="TIGR01356">
    <property type="entry name" value="aroA"/>
    <property type="match status" value="1"/>
</dbReference>
<dbReference type="PANTHER" id="PTHR21090">
    <property type="entry name" value="AROM/DEHYDROQUINATE SYNTHASE"/>
    <property type="match status" value="1"/>
</dbReference>
<dbReference type="PANTHER" id="PTHR21090:SF5">
    <property type="entry name" value="PENTAFUNCTIONAL AROM POLYPEPTIDE"/>
    <property type="match status" value="1"/>
</dbReference>
<dbReference type="Pfam" id="PF00275">
    <property type="entry name" value="EPSP_synthase"/>
    <property type="match status" value="1"/>
</dbReference>
<dbReference type="PIRSF" id="PIRSF000505">
    <property type="entry name" value="EPSPS"/>
    <property type="match status" value="1"/>
</dbReference>
<dbReference type="SUPFAM" id="SSF55205">
    <property type="entry name" value="EPT/RTPC-like"/>
    <property type="match status" value="1"/>
</dbReference>
<dbReference type="PROSITE" id="PS00104">
    <property type="entry name" value="EPSP_SYNTHASE_1"/>
    <property type="match status" value="1"/>
</dbReference>
<dbReference type="PROSITE" id="PS00885">
    <property type="entry name" value="EPSP_SYNTHASE_2"/>
    <property type="match status" value="1"/>
</dbReference>
<proteinExistence type="inferred from homology"/>
<accession>B3PJM0</accession>
<organism>
    <name type="scientific">Cellvibrio japonicus (strain Ueda107)</name>
    <name type="common">Pseudomonas fluorescens subsp. cellulosa</name>
    <dbReference type="NCBI Taxonomy" id="498211"/>
    <lineage>
        <taxon>Bacteria</taxon>
        <taxon>Pseudomonadati</taxon>
        <taxon>Pseudomonadota</taxon>
        <taxon>Gammaproteobacteria</taxon>
        <taxon>Cellvibrionales</taxon>
        <taxon>Cellvibrionaceae</taxon>
        <taxon>Cellvibrio</taxon>
    </lineage>
</organism>
<protein>
    <recommendedName>
        <fullName evidence="1">3-phosphoshikimate 1-carboxyvinyltransferase</fullName>
        <ecNumber evidence="1">2.5.1.19</ecNumber>
    </recommendedName>
    <alternativeName>
        <fullName evidence="1">5-enolpyruvylshikimate-3-phosphate synthase</fullName>
        <shortName evidence="1">EPSP synthase</shortName>
        <shortName evidence="1">EPSPS</shortName>
    </alternativeName>
</protein>
<name>AROA_CELJU</name>
<gene>
    <name evidence="1" type="primary">aroA</name>
    <name type="ordered locus">CJA_0627</name>
</gene>